<reference key="1">
    <citation type="submission" date="2000-06" db="EMBL/GenBank/DDBJ databases">
        <title>Cloning and characterization of a novel transcription factor HIT-39 in the brain.</title>
        <authorList>
            <person name="Ishii K."/>
            <person name="Araki K."/>
            <person name="Nawa H."/>
        </authorList>
    </citation>
    <scope>NUCLEOTIDE SEQUENCE [MRNA]</scope>
    <source>
        <strain>Sprague-Dawley</strain>
        <tissue>Brain</tissue>
    </source>
</reference>
<gene>
    <name type="primary">Znf689</name>
    <name type="synonym">Hit39</name>
    <name type="synonym">Zfp689</name>
</gene>
<organism>
    <name type="scientific">Rattus norvegicus</name>
    <name type="common">Rat</name>
    <dbReference type="NCBI Taxonomy" id="10116"/>
    <lineage>
        <taxon>Eukaryota</taxon>
        <taxon>Metazoa</taxon>
        <taxon>Chordata</taxon>
        <taxon>Craniata</taxon>
        <taxon>Vertebrata</taxon>
        <taxon>Euteleostomi</taxon>
        <taxon>Mammalia</taxon>
        <taxon>Eutheria</taxon>
        <taxon>Euarchontoglires</taxon>
        <taxon>Glires</taxon>
        <taxon>Rodentia</taxon>
        <taxon>Myomorpha</taxon>
        <taxon>Muroidea</taxon>
        <taxon>Muridae</taxon>
        <taxon>Murinae</taxon>
        <taxon>Rattus</taxon>
    </lineage>
</organism>
<comment type="function">
    <text>May be involved in transcriptional regulation.</text>
</comment>
<comment type="subcellular location">
    <subcellularLocation>
        <location evidence="5">Nucleus</location>
    </subcellularLocation>
</comment>
<comment type="similarity">
    <text evidence="5">Belongs to the krueppel C2H2-type zinc-finger protein family.</text>
</comment>
<sequence>MAPPSAPLLEQAPGEVGPTRRRGRRPRALKFADVAVYFSSEEWGRLRPAQRTLYRDVMRETYGLLGALGCAGPKPALITWLERNTDDWEPAALDPQEYRRWVTFQRKTRTRQKNEEKEVFPPKDVPRKGKRGRKPSKPRLIARQTSGGPICPDCGCTFPDLPALESHKCAQNLKKPYPCPDCGRRFSYPSLLVSHRRAHSGECPYVCDQCGKRFSQRKNLSQHQVIHTGEKPYHCPDCGRCFRRSRSLANHRTTHTGEKPHQCPSCGRRFAYPSLLAIHQRTHTGEKPYTCLECSRRFRQRTALVIHQRIHTGEKPYPCPDCERRFSSSSRLVSHRRVHSGERPYACEHCEARFSQRSTLLQHQLLHTGEKPYPCPDCGRAFRRSGSLAIHRSTHTEEKLHACDDCGRRFAYPSLLASHRRVHSGERPYACDLCSKRFAQWSHLAQHQLLHTGEKPFPCLECGRCFRQRWSLAVHKCCPNTHNGSPRPLIGGPNQRSSAL</sequence>
<dbReference type="EMBL" id="AF277902">
    <property type="protein sequence ID" value="AAG53888.1"/>
    <property type="molecule type" value="mRNA"/>
</dbReference>
<dbReference type="RefSeq" id="NP_775452.1">
    <property type="nucleotide sequence ID" value="NM_173330.1"/>
</dbReference>
<dbReference type="SMR" id="Q99PJ7"/>
<dbReference type="FunCoup" id="Q99PJ7">
    <property type="interactions" value="3"/>
</dbReference>
<dbReference type="PhosphoSitePlus" id="Q99PJ7"/>
<dbReference type="PaxDb" id="10116-ENSRNOP00000024969"/>
<dbReference type="Ensembl" id="ENSRNOT00000024969.8">
    <property type="protein sequence ID" value="ENSRNOP00000024969.4"/>
    <property type="gene ID" value="ENSRNOG00000066277.1"/>
</dbReference>
<dbReference type="GeneID" id="286996"/>
<dbReference type="KEGG" id="rno:286996"/>
<dbReference type="UCSC" id="RGD:628696">
    <property type="organism name" value="rat"/>
</dbReference>
<dbReference type="AGR" id="RGD:628696"/>
<dbReference type="CTD" id="71131"/>
<dbReference type="RGD" id="628696">
    <property type="gene designation" value="Zfp689"/>
</dbReference>
<dbReference type="eggNOG" id="KOG1721">
    <property type="taxonomic scope" value="Eukaryota"/>
</dbReference>
<dbReference type="GeneTree" id="ENSGT00940000162326"/>
<dbReference type="HOGENOM" id="CLU_002678_13_1_1"/>
<dbReference type="InParanoid" id="Q99PJ7"/>
<dbReference type="OMA" id="QSHKCAQ"/>
<dbReference type="OrthoDB" id="6077919at2759"/>
<dbReference type="PhylomeDB" id="Q99PJ7"/>
<dbReference type="TreeFam" id="TF336948"/>
<dbReference type="Reactome" id="R-RNO-212436">
    <property type="pathway name" value="Generic Transcription Pathway"/>
</dbReference>
<dbReference type="PRO" id="PR:Q99PJ7"/>
<dbReference type="Proteomes" id="UP000002494">
    <property type="component" value="Chromosome 1"/>
</dbReference>
<dbReference type="Bgee" id="ENSRNOG00000018877">
    <property type="expression patterns" value="Expressed in testis and 19 other cell types or tissues"/>
</dbReference>
<dbReference type="ExpressionAtlas" id="Q99PJ7">
    <property type="expression patterns" value="baseline and differential"/>
</dbReference>
<dbReference type="GO" id="GO:0005737">
    <property type="term" value="C:cytoplasm"/>
    <property type="evidence" value="ECO:0000266"/>
    <property type="project" value="RGD"/>
</dbReference>
<dbReference type="GO" id="GO:0005634">
    <property type="term" value="C:nucleus"/>
    <property type="evidence" value="ECO:0000266"/>
    <property type="project" value="RGD"/>
</dbReference>
<dbReference type="GO" id="GO:0000981">
    <property type="term" value="F:DNA-binding transcription factor activity, RNA polymerase II-specific"/>
    <property type="evidence" value="ECO:0000318"/>
    <property type="project" value="GO_Central"/>
</dbReference>
<dbReference type="GO" id="GO:0042393">
    <property type="term" value="F:histone binding"/>
    <property type="evidence" value="ECO:0000266"/>
    <property type="project" value="RGD"/>
</dbReference>
<dbReference type="GO" id="GO:0000978">
    <property type="term" value="F:RNA polymerase II cis-regulatory region sequence-specific DNA binding"/>
    <property type="evidence" value="ECO:0000318"/>
    <property type="project" value="GO_Central"/>
</dbReference>
<dbReference type="GO" id="GO:0008270">
    <property type="term" value="F:zinc ion binding"/>
    <property type="evidence" value="ECO:0007669"/>
    <property type="project" value="UniProtKB-KW"/>
</dbReference>
<dbReference type="GO" id="GO:0006357">
    <property type="term" value="P:regulation of transcription by RNA polymerase II"/>
    <property type="evidence" value="ECO:0000266"/>
    <property type="project" value="RGD"/>
</dbReference>
<dbReference type="GO" id="GO:0035914">
    <property type="term" value="P:skeletal muscle cell differentiation"/>
    <property type="evidence" value="ECO:0000266"/>
    <property type="project" value="RGD"/>
</dbReference>
<dbReference type="CDD" id="cd07765">
    <property type="entry name" value="KRAB_A-box"/>
    <property type="match status" value="1"/>
</dbReference>
<dbReference type="FunFam" id="3.30.160.60:FF:000295">
    <property type="entry name" value="zinc finger protein 19"/>
    <property type="match status" value="1"/>
</dbReference>
<dbReference type="FunFam" id="3.30.160.60:FF:001498">
    <property type="entry name" value="Zinc finger protein 404"/>
    <property type="match status" value="1"/>
</dbReference>
<dbReference type="FunFam" id="3.30.160.60:FF:000180">
    <property type="entry name" value="Zinc finger protein 689"/>
    <property type="match status" value="6"/>
</dbReference>
<dbReference type="FunFam" id="3.30.160.60:FF:000070">
    <property type="entry name" value="zinc finger protein 689 isoform X1"/>
    <property type="match status" value="2"/>
</dbReference>
<dbReference type="FunFam" id="3.30.160.60:FF:000710">
    <property type="entry name" value="Zinc finger protein 768"/>
    <property type="match status" value="1"/>
</dbReference>
<dbReference type="Gene3D" id="6.10.140.140">
    <property type="match status" value="1"/>
</dbReference>
<dbReference type="Gene3D" id="3.30.160.60">
    <property type="entry name" value="Classic Zinc Finger"/>
    <property type="match status" value="11"/>
</dbReference>
<dbReference type="InterPro" id="IPR001909">
    <property type="entry name" value="KRAB"/>
</dbReference>
<dbReference type="InterPro" id="IPR036051">
    <property type="entry name" value="KRAB_dom_sf"/>
</dbReference>
<dbReference type="InterPro" id="IPR036236">
    <property type="entry name" value="Znf_C2H2_sf"/>
</dbReference>
<dbReference type="InterPro" id="IPR013087">
    <property type="entry name" value="Znf_C2H2_type"/>
</dbReference>
<dbReference type="PANTHER" id="PTHR24394">
    <property type="entry name" value="ZINC FINGER PROTEIN"/>
    <property type="match status" value="1"/>
</dbReference>
<dbReference type="PANTHER" id="PTHR24394:SF48">
    <property type="entry name" value="ZINC FINGER PROTEIN 771"/>
    <property type="match status" value="1"/>
</dbReference>
<dbReference type="Pfam" id="PF01352">
    <property type="entry name" value="KRAB"/>
    <property type="match status" value="1"/>
</dbReference>
<dbReference type="Pfam" id="PF00096">
    <property type="entry name" value="zf-C2H2"/>
    <property type="match status" value="10"/>
</dbReference>
<dbReference type="SMART" id="SM00349">
    <property type="entry name" value="KRAB"/>
    <property type="match status" value="1"/>
</dbReference>
<dbReference type="SMART" id="SM00355">
    <property type="entry name" value="ZnF_C2H2"/>
    <property type="match status" value="12"/>
</dbReference>
<dbReference type="SUPFAM" id="SSF57667">
    <property type="entry name" value="beta-beta-alpha zinc fingers"/>
    <property type="match status" value="7"/>
</dbReference>
<dbReference type="SUPFAM" id="SSF109640">
    <property type="entry name" value="KRAB domain (Kruppel-associated box)"/>
    <property type="match status" value="1"/>
</dbReference>
<dbReference type="PROSITE" id="PS50805">
    <property type="entry name" value="KRAB"/>
    <property type="match status" value="1"/>
</dbReference>
<dbReference type="PROSITE" id="PS00028">
    <property type="entry name" value="ZINC_FINGER_C2H2_1"/>
    <property type="match status" value="10"/>
</dbReference>
<dbReference type="PROSITE" id="PS50157">
    <property type="entry name" value="ZINC_FINGER_C2H2_2"/>
    <property type="match status" value="11"/>
</dbReference>
<protein>
    <recommendedName>
        <fullName>Zinc finger protein 689</fullName>
    </recommendedName>
    <alternativeName>
        <fullName>Transcription factor HIT-39</fullName>
    </alternativeName>
</protein>
<proteinExistence type="evidence at transcript level"/>
<keyword id="KW-0238">DNA-binding</keyword>
<keyword id="KW-1017">Isopeptide bond</keyword>
<keyword id="KW-0479">Metal-binding</keyword>
<keyword id="KW-0539">Nucleus</keyword>
<keyword id="KW-1185">Reference proteome</keyword>
<keyword id="KW-0677">Repeat</keyword>
<keyword id="KW-0804">Transcription</keyword>
<keyword id="KW-0805">Transcription regulation</keyword>
<keyword id="KW-0832">Ubl conjugation</keyword>
<keyword id="KW-0862">Zinc</keyword>
<keyword id="KW-0863">Zinc-finger</keyword>
<name>ZN689_RAT</name>
<feature type="chain" id="PRO_0000234010" description="Zinc finger protein 689">
    <location>
        <begin position="1"/>
        <end position="500"/>
    </location>
</feature>
<feature type="domain" description="KRAB" evidence="3">
    <location>
        <begin position="29"/>
        <end position="100"/>
    </location>
</feature>
<feature type="zinc finger region" description="C2H2-type 1; degenerate" evidence="2">
    <location>
        <begin position="149"/>
        <end position="171"/>
    </location>
</feature>
<feature type="zinc finger region" description="C2H2-type 2" evidence="2">
    <location>
        <begin position="177"/>
        <end position="199"/>
    </location>
</feature>
<feature type="zinc finger region" description="C2H2-type 3" evidence="2">
    <location>
        <begin position="205"/>
        <end position="227"/>
    </location>
</feature>
<feature type="zinc finger region" description="C2H2-type 4" evidence="2">
    <location>
        <begin position="233"/>
        <end position="255"/>
    </location>
</feature>
<feature type="zinc finger region" description="C2H2-type 5" evidence="2">
    <location>
        <begin position="261"/>
        <end position="283"/>
    </location>
</feature>
<feature type="zinc finger region" description="C2H2-type 6" evidence="2">
    <location>
        <begin position="289"/>
        <end position="311"/>
    </location>
</feature>
<feature type="zinc finger region" description="C2H2-type 7" evidence="2">
    <location>
        <begin position="317"/>
        <end position="339"/>
    </location>
</feature>
<feature type="zinc finger region" description="C2H2-type 8" evidence="2">
    <location>
        <begin position="345"/>
        <end position="367"/>
    </location>
</feature>
<feature type="zinc finger region" description="C2H2-type 9" evidence="2">
    <location>
        <begin position="373"/>
        <end position="395"/>
    </location>
</feature>
<feature type="zinc finger region" description="C2H2-type 10" evidence="2">
    <location>
        <begin position="401"/>
        <end position="423"/>
    </location>
</feature>
<feature type="zinc finger region" description="C2H2-type 11" evidence="2">
    <location>
        <begin position="429"/>
        <end position="451"/>
    </location>
</feature>
<feature type="zinc finger region" description="C2H2-type 12" evidence="2">
    <location>
        <begin position="457"/>
        <end position="482"/>
    </location>
</feature>
<feature type="region of interest" description="Disordered" evidence="4">
    <location>
        <begin position="1"/>
        <end position="24"/>
    </location>
</feature>
<feature type="region of interest" description="Disordered" evidence="4">
    <location>
        <begin position="110"/>
        <end position="144"/>
    </location>
</feature>
<feature type="compositionally biased region" description="Basic and acidic residues" evidence="4">
    <location>
        <begin position="112"/>
        <end position="127"/>
    </location>
</feature>
<feature type="compositionally biased region" description="Basic residues" evidence="4">
    <location>
        <begin position="128"/>
        <end position="137"/>
    </location>
</feature>
<feature type="cross-link" description="Glycyl lysine isopeptide (Lys-Gly) (interchain with G-Cter in SUMO2)" evidence="1">
    <location>
        <position position="455"/>
    </location>
</feature>
<accession>Q99PJ7</accession>
<evidence type="ECO:0000250" key="1">
    <source>
        <dbReference type="UniProtKB" id="Q96CS4"/>
    </source>
</evidence>
<evidence type="ECO:0000255" key="2">
    <source>
        <dbReference type="PROSITE-ProRule" id="PRU00042"/>
    </source>
</evidence>
<evidence type="ECO:0000255" key="3">
    <source>
        <dbReference type="PROSITE-ProRule" id="PRU00119"/>
    </source>
</evidence>
<evidence type="ECO:0000256" key="4">
    <source>
        <dbReference type="SAM" id="MobiDB-lite"/>
    </source>
</evidence>
<evidence type="ECO:0000305" key="5"/>